<keyword id="KW-0238">DNA-binding</keyword>
<keyword id="KW-0539">Nucleus</keyword>
<keyword id="KW-1185">Reference proteome</keyword>
<keyword id="KW-0678">Repressor</keyword>
<keyword id="KW-0804">Transcription</keyword>
<keyword id="KW-0805">Transcription regulation</keyword>
<sequence length="280" mass="29510">MPADIMEKNSSSPVAATPASVNTTPDKPKTASEHRKSSKPIMEKRRRARINESLSQLKTLILDALKKDSSRHSKLEKADILEMTVKHLRNLQRAQMTAALSTDPSVLGKYRAGFSECMNEVTRFLSTCEGVNTEVRTRLLGHLANCMTQINAMTYPGQPHPALQAPPPPPPGPGGPQHAPFAPPPPLVPIPGGAAPPPGGAPCKLGSPAGEAAKVFGGFQVVPAPDGQFAFLIPNGAFAHSGPVIPVYTSNSGTSVGPNAVSPSSGPSLTADSMWRPWRN</sequence>
<protein>
    <recommendedName>
        <fullName>Transcription factor HES-1</fullName>
    </recommendedName>
    <alternativeName>
        <fullName>Hairy and enhancer of split 1</fullName>
    </alternativeName>
</protein>
<name>HES1_BOVIN</name>
<gene>
    <name type="primary">HES1</name>
</gene>
<comment type="function">
    <text evidence="1">Transcriptional repressor of genes that require a bHLH protein for their transcription. May act as a negative regulator of myogenesis by inhibiting the functions of MYOD1 and ASH1. Binds DNA on N-box motifs: 5'-CACNAG-3' with high affinity and on E-box motifs: 5'-CANNTG-3' with low affinity (By similarity). May play a role in a functional FA core complex response to DNA cross-link damage, being required for the stability and nuclear localization of FA core complex proteins, as well as for FANCD2 monoubiquitination in response to DNA damage (By similarity).</text>
</comment>
<comment type="subunit">
    <text evidence="1">Transcription repression requires formation of a complex with a corepressor protein of the Groucho/TLE family. Interacts with SIRT1. Interacts (via WPRW motif) with TLE1, and more weakly with TLE2. Interacts with HES6 (By similarity). Interacts with an FA complex, composed of FANCA, FANCF, FANCG and FANCL, but not of FANCC, nor FANCE (By similarity).</text>
</comment>
<comment type="subcellular location">
    <subcellularLocation>
        <location evidence="2 3">Nucleus</location>
    </subcellularLocation>
</comment>
<comment type="domain">
    <text evidence="1">Has a particular type of basic domain (presence of a helix-interrupting proline) that binds to the N-box (CACNAG), rather than the canonical E-box (CANNTG).</text>
</comment>
<comment type="domain">
    <text evidence="1">The C-terminal WRPW motif is a transcriptional repression domain necessary for the interaction with Groucho/TLE family members, transcriptional corepressors recruited to specific target DNA by Hairy-related proteins.</text>
</comment>
<comment type="domain">
    <text evidence="1">The bHLH, as well as cooperation between the central Orange domain and the C-terminal WRPW motif, is required for transcriptional repressor activity.</text>
</comment>
<dbReference type="EMBL" id="BC103309">
    <property type="protein sequence ID" value="AAI03310.1"/>
    <property type="molecule type" value="mRNA"/>
</dbReference>
<dbReference type="RefSeq" id="NP_001029850.1">
    <property type="nucleotide sequence ID" value="NM_001034678.1"/>
</dbReference>
<dbReference type="BMRB" id="Q3ZBG4"/>
<dbReference type="SMR" id="Q3ZBG4"/>
<dbReference type="FunCoup" id="Q3ZBG4">
    <property type="interactions" value="797"/>
</dbReference>
<dbReference type="STRING" id="9913.ENSBTAP00000000742"/>
<dbReference type="PaxDb" id="9913-ENSBTAP00000056047"/>
<dbReference type="GeneID" id="539547"/>
<dbReference type="KEGG" id="bta:539547"/>
<dbReference type="CTD" id="3280"/>
<dbReference type="VEuPathDB" id="HostDB:ENSBTAG00000000569"/>
<dbReference type="eggNOG" id="KOG4304">
    <property type="taxonomic scope" value="Eukaryota"/>
</dbReference>
<dbReference type="HOGENOM" id="CLU_068550_1_0_1"/>
<dbReference type="InParanoid" id="Q3ZBG4"/>
<dbReference type="OMA" id="AMNYPAQ"/>
<dbReference type="OrthoDB" id="6085656at2759"/>
<dbReference type="Proteomes" id="UP000009136">
    <property type="component" value="Chromosome 1"/>
</dbReference>
<dbReference type="Bgee" id="ENSBTAG00000000569">
    <property type="expression patterns" value="Expressed in urethra and 102 other cell types or tissues"/>
</dbReference>
<dbReference type="GO" id="GO:0005634">
    <property type="term" value="C:nucleus"/>
    <property type="evidence" value="ECO:0000250"/>
    <property type="project" value="UniProtKB"/>
</dbReference>
<dbReference type="GO" id="GO:0001227">
    <property type="term" value="F:DNA-binding transcription repressor activity, RNA polymerase II-specific"/>
    <property type="evidence" value="ECO:0000250"/>
    <property type="project" value="UniProtKB"/>
</dbReference>
<dbReference type="GO" id="GO:0070888">
    <property type="term" value="F:E-box binding"/>
    <property type="evidence" value="ECO:0000318"/>
    <property type="project" value="GO_Central"/>
</dbReference>
<dbReference type="GO" id="GO:0071820">
    <property type="term" value="F:N-box binding"/>
    <property type="evidence" value="ECO:0000250"/>
    <property type="project" value="UniProtKB"/>
</dbReference>
<dbReference type="GO" id="GO:0042803">
    <property type="term" value="F:protein homodimerization activity"/>
    <property type="evidence" value="ECO:0000250"/>
    <property type="project" value="UniProtKB"/>
</dbReference>
<dbReference type="GO" id="GO:0043565">
    <property type="term" value="F:sequence-specific DNA binding"/>
    <property type="evidence" value="ECO:0000250"/>
    <property type="project" value="UniProtKB"/>
</dbReference>
<dbReference type="GO" id="GO:0021861">
    <property type="term" value="P:forebrain radial glial cell differentiation"/>
    <property type="evidence" value="ECO:0000250"/>
    <property type="project" value="UniProtKB"/>
</dbReference>
<dbReference type="GO" id="GO:0045892">
    <property type="term" value="P:negative regulation of DNA-templated transcription"/>
    <property type="evidence" value="ECO:0000250"/>
    <property type="project" value="UniProtKB"/>
</dbReference>
<dbReference type="GO" id="GO:2000978">
    <property type="term" value="P:negative regulation of forebrain neuron differentiation"/>
    <property type="evidence" value="ECO:0000250"/>
    <property type="project" value="UniProtKB"/>
</dbReference>
<dbReference type="GO" id="GO:0060253">
    <property type="term" value="P:negative regulation of glial cell proliferation"/>
    <property type="evidence" value="ECO:0000250"/>
    <property type="project" value="UniProtKB"/>
</dbReference>
<dbReference type="GO" id="GO:0045665">
    <property type="term" value="P:negative regulation of neuron differentiation"/>
    <property type="evidence" value="ECO:0000318"/>
    <property type="project" value="GO_Central"/>
</dbReference>
<dbReference type="GO" id="GO:0048715">
    <property type="term" value="P:negative regulation of oligodendrocyte differentiation"/>
    <property type="evidence" value="ECO:0000250"/>
    <property type="project" value="UniProtKB"/>
</dbReference>
<dbReference type="GO" id="GO:2000974">
    <property type="term" value="P:negative regulation of pro-B cell differentiation"/>
    <property type="evidence" value="ECO:0000250"/>
    <property type="project" value="UniProtKB"/>
</dbReference>
<dbReference type="GO" id="GO:0000122">
    <property type="term" value="P:negative regulation of transcription by RNA polymerase II"/>
    <property type="evidence" value="ECO:0000250"/>
    <property type="project" value="UniProtKB"/>
</dbReference>
<dbReference type="GO" id="GO:0007219">
    <property type="term" value="P:Notch signaling pathway"/>
    <property type="evidence" value="ECO:0000318"/>
    <property type="project" value="GO_Central"/>
</dbReference>
<dbReference type="GO" id="GO:0048711">
    <property type="term" value="P:positive regulation of astrocyte differentiation"/>
    <property type="evidence" value="ECO:0000250"/>
    <property type="project" value="UniProtKB"/>
</dbReference>
<dbReference type="GO" id="GO:0043388">
    <property type="term" value="P:positive regulation of DNA binding"/>
    <property type="evidence" value="ECO:0000250"/>
    <property type="project" value="UniProtKB"/>
</dbReference>
<dbReference type="GO" id="GO:0046427">
    <property type="term" value="P:positive regulation of receptor signaling pathway via JAK-STAT"/>
    <property type="evidence" value="ECO:0000250"/>
    <property type="project" value="UniProtKB"/>
</dbReference>
<dbReference type="GO" id="GO:0042531">
    <property type="term" value="P:positive regulation of tyrosine phosphorylation of STAT protein"/>
    <property type="evidence" value="ECO:0000250"/>
    <property type="project" value="UniProtKB"/>
</dbReference>
<dbReference type="GO" id="GO:0065003">
    <property type="term" value="P:protein-containing complex assembly"/>
    <property type="evidence" value="ECO:0000250"/>
    <property type="project" value="UniProtKB"/>
</dbReference>
<dbReference type="GO" id="GO:0050767">
    <property type="term" value="P:regulation of neurogenesis"/>
    <property type="evidence" value="ECO:0000318"/>
    <property type="project" value="GO_Central"/>
</dbReference>
<dbReference type="GO" id="GO:0046425">
    <property type="term" value="P:regulation of receptor signaling pathway via JAK-STAT"/>
    <property type="evidence" value="ECO:0000250"/>
    <property type="project" value="UniProtKB"/>
</dbReference>
<dbReference type="CDD" id="cd11459">
    <property type="entry name" value="bHLH-O_HES1_4"/>
    <property type="match status" value="1"/>
</dbReference>
<dbReference type="FunFam" id="4.10.280.10:FF:000009">
    <property type="entry name" value="Transcription factor HES-1"/>
    <property type="match status" value="1"/>
</dbReference>
<dbReference type="Gene3D" id="6.10.250.980">
    <property type="match status" value="1"/>
</dbReference>
<dbReference type="Gene3D" id="4.10.280.10">
    <property type="entry name" value="Helix-loop-helix DNA-binding domain"/>
    <property type="match status" value="1"/>
</dbReference>
<dbReference type="InterPro" id="IPR011598">
    <property type="entry name" value="bHLH_dom"/>
</dbReference>
<dbReference type="InterPro" id="IPR050370">
    <property type="entry name" value="HES_HEY"/>
</dbReference>
<dbReference type="InterPro" id="IPR036638">
    <property type="entry name" value="HLH_DNA-bd_sf"/>
</dbReference>
<dbReference type="InterPro" id="IPR003650">
    <property type="entry name" value="Orange_dom"/>
</dbReference>
<dbReference type="PANTHER" id="PTHR10985">
    <property type="entry name" value="BASIC HELIX-LOOP-HELIX TRANSCRIPTION FACTOR, HES-RELATED"/>
    <property type="match status" value="1"/>
</dbReference>
<dbReference type="Pfam" id="PF07527">
    <property type="entry name" value="Hairy_orange"/>
    <property type="match status" value="1"/>
</dbReference>
<dbReference type="Pfam" id="PF00010">
    <property type="entry name" value="HLH"/>
    <property type="match status" value="1"/>
</dbReference>
<dbReference type="SMART" id="SM00353">
    <property type="entry name" value="HLH"/>
    <property type="match status" value="1"/>
</dbReference>
<dbReference type="SMART" id="SM00511">
    <property type="entry name" value="ORANGE"/>
    <property type="match status" value="1"/>
</dbReference>
<dbReference type="SUPFAM" id="SSF47459">
    <property type="entry name" value="HLH, helix-loop-helix DNA-binding domain"/>
    <property type="match status" value="1"/>
</dbReference>
<dbReference type="SUPFAM" id="SSF158457">
    <property type="entry name" value="Orange domain-like"/>
    <property type="match status" value="1"/>
</dbReference>
<dbReference type="PROSITE" id="PS50888">
    <property type="entry name" value="BHLH"/>
    <property type="match status" value="1"/>
</dbReference>
<dbReference type="PROSITE" id="PS51054">
    <property type="entry name" value="ORANGE"/>
    <property type="match status" value="1"/>
</dbReference>
<evidence type="ECO:0000250" key="1"/>
<evidence type="ECO:0000255" key="2">
    <source>
        <dbReference type="PROSITE-ProRule" id="PRU00380"/>
    </source>
</evidence>
<evidence type="ECO:0000255" key="3">
    <source>
        <dbReference type="PROSITE-ProRule" id="PRU00981"/>
    </source>
</evidence>
<evidence type="ECO:0000256" key="4">
    <source>
        <dbReference type="SAM" id="MobiDB-lite"/>
    </source>
</evidence>
<proteinExistence type="evidence at transcript level"/>
<feature type="chain" id="PRO_0000127201" description="Transcription factor HES-1">
    <location>
        <begin position="1"/>
        <end position="280"/>
    </location>
</feature>
<feature type="domain" description="bHLH" evidence="3">
    <location>
        <begin position="34"/>
        <end position="91"/>
    </location>
</feature>
<feature type="domain" description="Orange" evidence="2">
    <location>
        <begin position="110"/>
        <end position="143"/>
    </location>
</feature>
<feature type="region of interest" description="Disordered" evidence="4">
    <location>
        <begin position="1"/>
        <end position="44"/>
    </location>
</feature>
<feature type="region of interest" description="Disordered" evidence="4">
    <location>
        <begin position="157"/>
        <end position="200"/>
    </location>
</feature>
<feature type="region of interest" description="Disordered" evidence="4">
    <location>
        <begin position="254"/>
        <end position="280"/>
    </location>
</feature>
<feature type="short sequence motif" description="WRPW motif">
    <location>
        <begin position="275"/>
        <end position="278"/>
    </location>
</feature>
<feature type="compositionally biased region" description="Low complexity" evidence="4">
    <location>
        <begin position="10"/>
        <end position="21"/>
    </location>
</feature>
<feature type="compositionally biased region" description="Basic and acidic residues" evidence="4">
    <location>
        <begin position="26"/>
        <end position="35"/>
    </location>
</feature>
<feature type="compositionally biased region" description="Pro residues" evidence="4">
    <location>
        <begin position="164"/>
        <end position="174"/>
    </location>
</feature>
<feature type="compositionally biased region" description="Pro residues" evidence="4">
    <location>
        <begin position="181"/>
        <end position="200"/>
    </location>
</feature>
<feature type="compositionally biased region" description="Polar residues" evidence="4">
    <location>
        <begin position="254"/>
        <end position="271"/>
    </location>
</feature>
<reference key="1">
    <citation type="submission" date="2005-08" db="EMBL/GenBank/DDBJ databases">
        <authorList>
            <consortium name="NIH - Mammalian Gene Collection (MGC) project"/>
        </authorList>
    </citation>
    <scope>NUCLEOTIDE SEQUENCE [LARGE SCALE MRNA]</scope>
    <source>
        <strain>Hereford</strain>
        <tissue>Ascending colon</tissue>
    </source>
</reference>
<organism>
    <name type="scientific">Bos taurus</name>
    <name type="common">Bovine</name>
    <dbReference type="NCBI Taxonomy" id="9913"/>
    <lineage>
        <taxon>Eukaryota</taxon>
        <taxon>Metazoa</taxon>
        <taxon>Chordata</taxon>
        <taxon>Craniata</taxon>
        <taxon>Vertebrata</taxon>
        <taxon>Euteleostomi</taxon>
        <taxon>Mammalia</taxon>
        <taxon>Eutheria</taxon>
        <taxon>Laurasiatheria</taxon>
        <taxon>Artiodactyla</taxon>
        <taxon>Ruminantia</taxon>
        <taxon>Pecora</taxon>
        <taxon>Bovidae</taxon>
        <taxon>Bovinae</taxon>
        <taxon>Bos</taxon>
    </lineage>
</organism>
<accession>Q3ZBG4</accession>